<evidence type="ECO:0000255" key="1">
    <source>
        <dbReference type="HAMAP-Rule" id="MF_00110"/>
    </source>
</evidence>
<comment type="function">
    <text evidence="1">Catalyzes the conversion of 3-deoxy-D-arabino-heptulosonate 7-phosphate (DAHP) to dehydroquinate (DHQ).</text>
</comment>
<comment type="catalytic activity">
    <reaction evidence="1">
        <text>7-phospho-2-dehydro-3-deoxy-D-arabino-heptonate = 3-dehydroquinate + phosphate</text>
        <dbReference type="Rhea" id="RHEA:21968"/>
        <dbReference type="ChEBI" id="CHEBI:32364"/>
        <dbReference type="ChEBI" id="CHEBI:43474"/>
        <dbReference type="ChEBI" id="CHEBI:58394"/>
        <dbReference type="EC" id="4.2.3.4"/>
    </reaction>
</comment>
<comment type="cofactor">
    <cofactor evidence="1">
        <name>NAD(+)</name>
        <dbReference type="ChEBI" id="CHEBI:57540"/>
    </cofactor>
</comment>
<comment type="cofactor">
    <cofactor evidence="1">
        <name>Co(2+)</name>
        <dbReference type="ChEBI" id="CHEBI:48828"/>
    </cofactor>
    <cofactor evidence="1">
        <name>Zn(2+)</name>
        <dbReference type="ChEBI" id="CHEBI:29105"/>
    </cofactor>
    <text evidence="1">Binds 1 divalent metal cation per subunit. Can use either Co(2+) or Zn(2+).</text>
</comment>
<comment type="pathway">
    <text evidence="1">Metabolic intermediate biosynthesis; chorismate biosynthesis; chorismate from D-erythrose 4-phosphate and phosphoenolpyruvate: step 2/7.</text>
</comment>
<comment type="subcellular location">
    <subcellularLocation>
        <location evidence="1">Cytoplasm</location>
    </subcellularLocation>
</comment>
<comment type="similarity">
    <text evidence="1">Belongs to the sugar phosphate cyclases superfamily. Dehydroquinate synthase family.</text>
</comment>
<gene>
    <name evidence="1" type="primary">aroB</name>
    <name type="ordered locus">BP3657</name>
</gene>
<proteinExistence type="inferred from homology"/>
<reference key="1">
    <citation type="journal article" date="2003" name="Nat. Genet.">
        <title>Comparative analysis of the genome sequences of Bordetella pertussis, Bordetella parapertussis and Bordetella bronchiseptica.</title>
        <authorList>
            <person name="Parkhill J."/>
            <person name="Sebaihia M."/>
            <person name="Preston A."/>
            <person name="Murphy L.D."/>
            <person name="Thomson N.R."/>
            <person name="Harris D.E."/>
            <person name="Holden M.T.G."/>
            <person name="Churcher C.M."/>
            <person name="Bentley S.D."/>
            <person name="Mungall K.L."/>
            <person name="Cerdeno-Tarraga A.-M."/>
            <person name="Temple L."/>
            <person name="James K.D."/>
            <person name="Harris B."/>
            <person name="Quail M.A."/>
            <person name="Achtman M."/>
            <person name="Atkin R."/>
            <person name="Baker S."/>
            <person name="Basham D."/>
            <person name="Bason N."/>
            <person name="Cherevach I."/>
            <person name="Chillingworth T."/>
            <person name="Collins M."/>
            <person name="Cronin A."/>
            <person name="Davis P."/>
            <person name="Doggett J."/>
            <person name="Feltwell T."/>
            <person name="Goble A."/>
            <person name="Hamlin N."/>
            <person name="Hauser H."/>
            <person name="Holroyd S."/>
            <person name="Jagels K."/>
            <person name="Leather S."/>
            <person name="Moule S."/>
            <person name="Norberczak H."/>
            <person name="O'Neil S."/>
            <person name="Ormond D."/>
            <person name="Price C."/>
            <person name="Rabbinowitsch E."/>
            <person name="Rutter S."/>
            <person name="Sanders M."/>
            <person name="Saunders D."/>
            <person name="Seeger K."/>
            <person name="Sharp S."/>
            <person name="Simmonds M."/>
            <person name="Skelton J."/>
            <person name="Squares R."/>
            <person name="Squares S."/>
            <person name="Stevens K."/>
            <person name="Unwin L."/>
            <person name="Whitehead S."/>
            <person name="Barrell B.G."/>
            <person name="Maskell D.J."/>
        </authorList>
    </citation>
    <scope>NUCLEOTIDE SEQUENCE [LARGE SCALE GENOMIC DNA]</scope>
    <source>
        <strain>Tohama I / ATCC BAA-589 / NCTC 13251</strain>
    </source>
</reference>
<organism>
    <name type="scientific">Bordetella pertussis (strain Tohama I / ATCC BAA-589 / NCTC 13251)</name>
    <dbReference type="NCBI Taxonomy" id="257313"/>
    <lineage>
        <taxon>Bacteria</taxon>
        <taxon>Pseudomonadati</taxon>
        <taxon>Pseudomonadota</taxon>
        <taxon>Betaproteobacteria</taxon>
        <taxon>Burkholderiales</taxon>
        <taxon>Alcaligenaceae</taxon>
        <taxon>Bordetella</taxon>
    </lineage>
</organism>
<feature type="chain" id="PRO_0000140713" description="3-dehydroquinate synthase">
    <location>
        <begin position="1"/>
        <end position="358"/>
    </location>
</feature>
<feature type="binding site" evidence="1">
    <location>
        <begin position="70"/>
        <end position="75"/>
    </location>
    <ligand>
        <name>NAD(+)</name>
        <dbReference type="ChEBI" id="CHEBI:57540"/>
    </ligand>
</feature>
<feature type="binding site" evidence="1">
    <location>
        <begin position="104"/>
        <end position="108"/>
    </location>
    <ligand>
        <name>NAD(+)</name>
        <dbReference type="ChEBI" id="CHEBI:57540"/>
    </ligand>
</feature>
<feature type="binding site" evidence="1">
    <location>
        <begin position="128"/>
        <end position="129"/>
    </location>
    <ligand>
        <name>NAD(+)</name>
        <dbReference type="ChEBI" id="CHEBI:57540"/>
    </ligand>
</feature>
<feature type="binding site" evidence="1">
    <location>
        <position position="141"/>
    </location>
    <ligand>
        <name>NAD(+)</name>
        <dbReference type="ChEBI" id="CHEBI:57540"/>
    </ligand>
</feature>
<feature type="binding site" evidence="1">
    <location>
        <position position="150"/>
    </location>
    <ligand>
        <name>NAD(+)</name>
        <dbReference type="ChEBI" id="CHEBI:57540"/>
    </ligand>
</feature>
<feature type="binding site" evidence="1">
    <location>
        <position position="183"/>
    </location>
    <ligand>
        <name>Zn(2+)</name>
        <dbReference type="ChEBI" id="CHEBI:29105"/>
    </ligand>
</feature>
<feature type="binding site" evidence="1">
    <location>
        <position position="246"/>
    </location>
    <ligand>
        <name>Zn(2+)</name>
        <dbReference type="ChEBI" id="CHEBI:29105"/>
    </ligand>
</feature>
<feature type="binding site" evidence="1">
    <location>
        <position position="263"/>
    </location>
    <ligand>
        <name>Zn(2+)</name>
        <dbReference type="ChEBI" id="CHEBI:29105"/>
    </ligand>
</feature>
<keyword id="KW-0028">Amino-acid biosynthesis</keyword>
<keyword id="KW-0057">Aromatic amino acid biosynthesis</keyword>
<keyword id="KW-0170">Cobalt</keyword>
<keyword id="KW-0963">Cytoplasm</keyword>
<keyword id="KW-0456">Lyase</keyword>
<keyword id="KW-0479">Metal-binding</keyword>
<keyword id="KW-0520">NAD</keyword>
<keyword id="KW-0547">Nucleotide-binding</keyword>
<keyword id="KW-1185">Reference proteome</keyword>
<keyword id="KW-0862">Zinc</keyword>
<protein>
    <recommendedName>
        <fullName evidence="1">3-dehydroquinate synthase</fullName>
        <shortName evidence="1">DHQS</shortName>
        <ecNumber evidence="1">4.2.3.4</ecNumber>
    </recommendedName>
</protein>
<accession>Q7VT93</accession>
<dbReference type="EC" id="4.2.3.4" evidence="1"/>
<dbReference type="EMBL" id="BX640422">
    <property type="protein sequence ID" value="CAE43914.1"/>
    <property type="molecule type" value="Genomic_DNA"/>
</dbReference>
<dbReference type="RefSeq" id="NP_882165.1">
    <property type="nucleotide sequence ID" value="NC_002929.2"/>
</dbReference>
<dbReference type="RefSeq" id="WP_003806948.1">
    <property type="nucleotide sequence ID" value="NZ_CP039022.1"/>
</dbReference>
<dbReference type="SMR" id="Q7VT93"/>
<dbReference type="STRING" id="257313.BP3657"/>
<dbReference type="PaxDb" id="257313-BP3657"/>
<dbReference type="GeneID" id="93206303"/>
<dbReference type="KEGG" id="bpe:BP3657"/>
<dbReference type="PATRIC" id="fig|257313.5.peg.3955"/>
<dbReference type="eggNOG" id="COG0337">
    <property type="taxonomic scope" value="Bacteria"/>
</dbReference>
<dbReference type="HOGENOM" id="CLU_001201_0_2_4"/>
<dbReference type="UniPathway" id="UPA00053">
    <property type="reaction ID" value="UER00085"/>
</dbReference>
<dbReference type="Proteomes" id="UP000002676">
    <property type="component" value="Chromosome"/>
</dbReference>
<dbReference type="GO" id="GO:0005737">
    <property type="term" value="C:cytoplasm"/>
    <property type="evidence" value="ECO:0007669"/>
    <property type="project" value="UniProtKB-SubCell"/>
</dbReference>
<dbReference type="GO" id="GO:0003856">
    <property type="term" value="F:3-dehydroquinate synthase activity"/>
    <property type="evidence" value="ECO:0007669"/>
    <property type="project" value="UniProtKB-UniRule"/>
</dbReference>
<dbReference type="GO" id="GO:0046872">
    <property type="term" value="F:metal ion binding"/>
    <property type="evidence" value="ECO:0007669"/>
    <property type="project" value="UniProtKB-KW"/>
</dbReference>
<dbReference type="GO" id="GO:0000166">
    <property type="term" value="F:nucleotide binding"/>
    <property type="evidence" value="ECO:0007669"/>
    <property type="project" value="UniProtKB-KW"/>
</dbReference>
<dbReference type="GO" id="GO:0008652">
    <property type="term" value="P:amino acid biosynthetic process"/>
    <property type="evidence" value="ECO:0007669"/>
    <property type="project" value="UniProtKB-KW"/>
</dbReference>
<dbReference type="GO" id="GO:0009073">
    <property type="term" value="P:aromatic amino acid family biosynthetic process"/>
    <property type="evidence" value="ECO:0007669"/>
    <property type="project" value="UniProtKB-KW"/>
</dbReference>
<dbReference type="GO" id="GO:0009423">
    <property type="term" value="P:chorismate biosynthetic process"/>
    <property type="evidence" value="ECO:0007669"/>
    <property type="project" value="UniProtKB-UniRule"/>
</dbReference>
<dbReference type="CDD" id="cd08195">
    <property type="entry name" value="DHQS"/>
    <property type="match status" value="1"/>
</dbReference>
<dbReference type="FunFam" id="3.40.50.1970:FF:000001">
    <property type="entry name" value="3-dehydroquinate synthase"/>
    <property type="match status" value="1"/>
</dbReference>
<dbReference type="Gene3D" id="3.40.50.1970">
    <property type="match status" value="1"/>
</dbReference>
<dbReference type="Gene3D" id="1.20.1090.10">
    <property type="entry name" value="Dehydroquinate synthase-like - alpha domain"/>
    <property type="match status" value="1"/>
</dbReference>
<dbReference type="HAMAP" id="MF_00110">
    <property type="entry name" value="DHQ_synthase"/>
    <property type="match status" value="1"/>
</dbReference>
<dbReference type="InterPro" id="IPR050071">
    <property type="entry name" value="Dehydroquinate_synthase"/>
</dbReference>
<dbReference type="InterPro" id="IPR016037">
    <property type="entry name" value="DHQ_synth_AroB"/>
</dbReference>
<dbReference type="InterPro" id="IPR030963">
    <property type="entry name" value="DHQ_synth_fam"/>
</dbReference>
<dbReference type="InterPro" id="IPR030960">
    <property type="entry name" value="DHQS/DOIS_N"/>
</dbReference>
<dbReference type="InterPro" id="IPR056179">
    <property type="entry name" value="DHQS_C"/>
</dbReference>
<dbReference type="NCBIfam" id="TIGR01357">
    <property type="entry name" value="aroB"/>
    <property type="match status" value="1"/>
</dbReference>
<dbReference type="PANTHER" id="PTHR43622">
    <property type="entry name" value="3-DEHYDROQUINATE SYNTHASE"/>
    <property type="match status" value="1"/>
</dbReference>
<dbReference type="PANTHER" id="PTHR43622:SF7">
    <property type="entry name" value="3-DEHYDROQUINATE SYNTHASE, CHLOROPLASTIC"/>
    <property type="match status" value="1"/>
</dbReference>
<dbReference type="Pfam" id="PF01761">
    <property type="entry name" value="DHQ_synthase"/>
    <property type="match status" value="1"/>
</dbReference>
<dbReference type="Pfam" id="PF24621">
    <property type="entry name" value="DHQS_C"/>
    <property type="match status" value="1"/>
</dbReference>
<dbReference type="PIRSF" id="PIRSF001455">
    <property type="entry name" value="DHQ_synth"/>
    <property type="match status" value="1"/>
</dbReference>
<dbReference type="SUPFAM" id="SSF56796">
    <property type="entry name" value="Dehydroquinate synthase-like"/>
    <property type="match status" value="1"/>
</dbReference>
<sequence length="358" mass="38104">MDVVEVATPGGSYPIHIGPGRLDALDASIPADATAIAVVTNPTVAGLYGARVEAALARTGKRVLRIELPDGEAHKDWQTLNLIFDALLENRLDRRAVLVALGGGVIGDMTGFAAAVYMRGIRFVQVPTTLLAQVDSSVGGKTAVNHPLGKNMIGAFYQPVAVEIDTEVLGTLPAREVSAGLAEVIKYGLILDAGFWQWCEDNVGALRALEPRALAYAIRRSCELKAQVVGQDERESGLRAILNLGHTFGHAIESGLGYGEWLHGEAVGCGMVQAAELSTLAAGFPAADVQRVRDLVREIGCPTVAPDLGAERWLALMQVDKKTEGGEIRFVLMPRIGQALSRAAPEADVRTALERTTR</sequence>
<name>AROB_BORPE</name>